<accession>Q05FT9</accession>
<protein>
    <recommendedName>
        <fullName evidence="1">Chaperonin GroEL</fullName>
        <ecNumber evidence="1">5.6.1.7</ecNumber>
    </recommendedName>
    <alternativeName>
        <fullName evidence="1">60 kDa chaperonin</fullName>
    </alternativeName>
    <alternativeName>
        <fullName evidence="1">Chaperonin-60</fullName>
        <shortName evidence="1">Cpn60</shortName>
    </alternativeName>
</protein>
<gene>
    <name evidence="1" type="primary">groEL</name>
    <name evidence="1" type="synonym">groL</name>
    <name type="ordered locus">CRP_051</name>
</gene>
<keyword id="KW-0067">ATP-binding</keyword>
<keyword id="KW-0143">Chaperone</keyword>
<keyword id="KW-0963">Cytoplasm</keyword>
<keyword id="KW-0413">Isomerase</keyword>
<keyword id="KW-0547">Nucleotide-binding</keyword>
<evidence type="ECO:0000255" key="1">
    <source>
        <dbReference type="HAMAP-Rule" id="MF_00600"/>
    </source>
</evidence>
<dbReference type="EC" id="5.6.1.7" evidence="1"/>
<dbReference type="EMBL" id="AP009180">
    <property type="protein sequence ID" value="BAF35082.1"/>
    <property type="molecule type" value="Genomic_DNA"/>
</dbReference>
<dbReference type="RefSeq" id="WP_011672274.1">
    <property type="nucleotide sequence ID" value="NC_008512.1"/>
</dbReference>
<dbReference type="SMR" id="Q05FT9"/>
<dbReference type="STRING" id="387662.CRP_051"/>
<dbReference type="KEGG" id="crp:CRP_051"/>
<dbReference type="HOGENOM" id="CLU_016503_3_0_6"/>
<dbReference type="OrthoDB" id="9766614at2"/>
<dbReference type="Proteomes" id="UP000000777">
    <property type="component" value="Chromosome"/>
</dbReference>
<dbReference type="GO" id="GO:0005737">
    <property type="term" value="C:cytoplasm"/>
    <property type="evidence" value="ECO:0007669"/>
    <property type="project" value="UniProtKB-SubCell"/>
</dbReference>
<dbReference type="GO" id="GO:0005524">
    <property type="term" value="F:ATP binding"/>
    <property type="evidence" value="ECO:0007669"/>
    <property type="project" value="UniProtKB-UniRule"/>
</dbReference>
<dbReference type="GO" id="GO:0140662">
    <property type="term" value="F:ATP-dependent protein folding chaperone"/>
    <property type="evidence" value="ECO:0007669"/>
    <property type="project" value="InterPro"/>
</dbReference>
<dbReference type="GO" id="GO:0016853">
    <property type="term" value="F:isomerase activity"/>
    <property type="evidence" value="ECO:0007669"/>
    <property type="project" value="UniProtKB-KW"/>
</dbReference>
<dbReference type="GO" id="GO:0051082">
    <property type="term" value="F:unfolded protein binding"/>
    <property type="evidence" value="ECO:0007669"/>
    <property type="project" value="UniProtKB-UniRule"/>
</dbReference>
<dbReference type="GO" id="GO:0042026">
    <property type="term" value="P:protein refolding"/>
    <property type="evidence" value="ECO:0007669"/>
    <property type="project" value="UniProtKB-UniRule"/>
</dbReference>
<dbReference type="CDD" id="cd03344">
    <property type="entry name" value="GroEL"/>
    <property type="match status" value="1"/>
</dbReference>
<dbReference type="FunFam" id="3.50.7.10:FF:000001">
    <property type="entry name" value="60 kDa chaperonin"/>
    <property type="match status" value="1"/>
</dbReference>
<dbReference type="Gene3D" id="3.50.7.10">
    <property type="entry name" value="GroEL"/>
    <property type="match status" value="1"/>
</dbReference>
<dbReference type="Gene3D" id="1.10.560.10">
    <property type="entry name" value="GroEL-like equatorial domain"/>
    <property type="match status" value="1"/>
</dbReference>
<dbReference type="Gene3D" id="3.30.260.10">
    <property type="entry name" value="TCP-1-like chaperonin intermediate domain"/>
    <property type="match status" value="1"/>
</dbReference>
<dbReference type="HAMAP" id="MF_00600">
    <property type="entry name" value="CH60"/>
    <property type="match status" value="1"/>
</dbReference>
<dbReference type="InterPro" id="IPR018370">
    <property type="entry name" value="Chaperonin_Cpn60_CS"/>
</dbReference>
<dbReference type="InterPro" id="IPR001844">
    <property type="entry name" value="Cpn60/GroEL"/>
</dbReference>
<dbReference type="InterPro" id="IPR002423">
    <property type="entry name" value="Cpn60/GroEL/TCP-1"/>
</dbReference>
<dbReference type="InterPro" id="IPR027409">
    <property type="entry name" value="GroEL-like_apical_dom_sf"/>
</dbReference>
<dbReference type="InterPro" id="IPR027413">
    <property type="entry name" value="GROEL-like_equatorial_sf"/>
</dbReference>
<dbReference type="InterPro" id="IPR027410">
    <property type="entry name" value="TCP-1-like_intermed_sf"/>
</dbReference>
<dbReference type="NCBIfam" id="TIGR02348">
    <property type="entry name" value="GroEL"/>
    <property type="match status" value="1"/>
</dbReference>
<dbReference type="NCBIfam" id="NF000592">
    <property type="entry name" value="PRK00013.1"/>
    <property type="match status" value="1"/>
</dbReference>
<dbReference type="NCBIfam" id="NF009487">
    <property type="entry name" value="PRK12849.1"/>
    <property type="match status" value="1"/>
</dbReference>
<dbReference type="NCBIfam" id="NF009488">
    <property type="entry name" value="PRK12850.1"/>
    <property type="match status" value="1"/>
</dbReference>
<dbReference type="NCBIfam" id="NF009489">
    <property type="entry name" value="PRK12851.1"/>
    <property type="match status" value="1"/>
</dbReference>
<dbReference type="PANTHER" id="PTHR45633">
    <property type="entry name" value="60 KDA HEAT SHOCK PROTEIN, MITOCHONDRIAL"/>
    <property type="match status" value="1"/>
</dbReference>
<dbReference type="Pfam" id="PF00118">
    <property type="entry name" value="Cpn60_TCP1"/>
    <property type="match status" value="1"/>
</dbReference>
<dbReference type="PRINTS" id="PR00298">
    <property type="entry name" value="CHAPERONIN60"/>
</dbReference>
<dbReference type="SUPFAM" id="SSF52029">
    <property type="entry name" value="GroEL apical domain-like"/>
    <property type="match status" value="1"/>
</dbReference>
<dbReference type="SUPFAM" id="SSF48592">
    <property type="entry name" value="GroEL equatorial domain-like"/>
    <property type="match status" value="1"/>
</dbReference>
<dbReference type="SUPFAM" id="SSF54849">
    <property type="entry name" value="GroEL-intermediate domain like"/>
    <property type="match status" value="1"/>
</dbReference>
<dbReference type="PROSITE" id="PS00296">
    <property type="entry name" value="CHAPERONINS_CPN60"/>
    <property type="match status" value="1"/>
</dbReference>
<organism>
    <name type="scientific">Carsonella ruddii (strain PV)</name>
    <dbReference type="NCBI Taxonomy" id="387662"/>
    <lineage>
        <taxon>Bacteria</taxon>
        <taxon>Pseudomonadati</taxon>
        <taxon>Pseudomonadota</taxon>
        <taxon>Gammaproteobacteria</taxon>
        <taxon>Oceanospirillales</taxon>
        <taxon>Halomonadaceae</taxon>
        <taxon>Zymobacter group</taxon>
        <taxon>Candidatus Carsonella</taxon>
    </lineage>
</organism>
<comment type="function">
    <text evidence="1">Together with its co-chaperonin GroES, plays an essential role in assisting protein folding. The GroEL-GroES system forms a nano-cage that allows encapsulation of the non-native substrate proteins and provides a physical environment optimized to promote and accelerate protein folding.</text>
</comment>
<comment type="catalytic activity">
    <reaction evidence="1">
        <text>ATP + H2O + a folded polypeptide = ADP + phosphate + an unfolded polypeptide.</text>
        <dbReference type="EC" id="5.6.1.7"/>
    </reaction>
</comment>
<comment type="subunit">
    <text evidence="1">Forms a cylinder of 14 subunits composed of two heptameric rings stacked back-to-back. Interacts with the co-chaperonin GroES.</text>
</comment>
<comment type="subcellular location">
    <subcellularLocation>
        <location evidence="1">Cytoplasm</location>
    </subcellularLocation>
</comment>
<comment type="similarity">
    <text evidence="1">Belongs to the chaperonin (HSP60) family.</text>
</comment>
<sequence>MGYKKIKFGDDARKSLAIGVNILADAVKTTLGPKGRNVILDKSFNSPLVTKDGVSVAKEIELKDKFENMGAQMVKEVASKTSDVAGDGTTTATVLAQTIVNEGIKAVISGINPMDLKRGIDKTIYQAVLELKKISIPCVDTLSISQVGTISANGETIIGKIISDAMNRVGKNGVITVDEGRGFEDELEVVEGMQFDRGYISPYFISNQENMSSILENCLILITDKKISNVRDIVNILELISKKNKSLFIIAEDIEGEALATLVINNIRGVLKILAVKAPGFGDRRKEILKDISILTGSTLISEELGIKLENIDLSLLGFAKKITSTKENTIILGGGGDENSIKKRINTIKKQISESLSDYDKEKLQERMAKLAGGVAVIRVGSATEIEMKEKKARIEDALHSTRAAVEEGVVIGGGVSLIRILNKLKNLQGDNEDQNYGIQIALKALEAPLRQIVKNSGGEPSIVLNNIKSSSNNFGYDASTGKYGDMFKMGIIDPVKVTRSALQSAGSIGGLLITTEAMIADYSDEKSV</sequence>
<feature type="chain" id="PRO_1000025768" description="Chaperonin GroEL">
    <location>
        <begin position="1"/>
        <end position="530"/>
    </location>
</feature>
<feature type="binding site" evidence="1">
    <location>
        <begin position="30"/>
        <end position="33"/>
    </location>
    <ligand>
        <name>ATP</name>
        <dbReference type="ChEBI" id="CHEBI:30616"/>
    </ligand>
</feature>
<feature type="binding site" evidence="1">
    <location>
        <position position="51"/>
    </location>
    <ligand>
        <name>ATP</name>
        <dbReference type="ChEBI" id="CHEBI:30616"/>
    </ligand>
</feature>
<feature type="binding site" evidence="1">
    <location>
        <begin position="87"/>
        <end position="91"/>
    </location>
    <ligand>
        <name>ATP</name>
        <dbReference type="ChEBI" id="CHEBI:30616"/>
    </ligand>
</feature>
<feature type="binding site" evidence="1">
    <location>
        <position position="415"/>
    </location>
    <ligand>
        <name>ATP</name>
        <dbReference type="ChEBI" id="CHEBI:30616"/>
    </ligand>
</feature>
<feature type="binding site" evidence="1">
    <location>
        <position position="495"/>
    </location>
    <ligand>
        <name>ATP</name>
        <dbReference type="ChEBI" id="CHEBI:30616"/>
    </ligand>
</feature>
<reference key="1">
    <citation type="journal article" date="2006" name="Science">
        <title>The 160-kilobase genome of the bacterial endosymbiont Carsonella.</title>
        <authorList>
            <person name="Nakabachi A."/>
            <person name="Yamashita A."/>
            <person name="Toh H."/>
            <person name="Ishikawa H."/>
            <person name="Dunbar H.E."/>
            <person name="Moran N.A."/>
            <person name="Hattori M."/>
        </authorList>
    </citation>
    <scope>NUCLEOTIDE SEQUENCE [LARGE SCALE GENOMIC DNA]</scope>
    <source>
        <strain>PV</strain>
    </source>
</reference>
<proteinExistence type="inferred from homology"/>
<name>CH60_CARRP</name>